<evidence type="ECO:0000255" key="1">
    <source>
        <dbReference type="HAMAP-Rule" id="MF_01345"/>
    </source>
</evidence>
<evidence type="ECO:0000305" key="2"/>
<protein>
    <recommendedName>
        <fullName evidence="1">Small ribosomal subunit protein uS17</fullName>
    </recommendedName>
    <alternativeName>
        <fullName evidence="2">30S ribosomal protein S17</fullName>
    </alternativeName>
</protein>
<proteinExistence type="inferred from homology"/>
<accession>Q89J93</accession>
<reference key="1">
    <citation type="journal article" date="2002" name="DNA Res.">
        <title>Complete genomic sequence of nitrogen-fixing symbiotic bacterium Bradyrhizobium japonicum USDA110.</title>
        <authorList>
            <person name="Kaneko T."/>
            <person name="Nakamura Y."/>
            <person name="Sato S."/>
            <person name="Minamisawa K."/>
            <person name="Uchiumi T."/>
            <person name="Sasamoto S."/>
            <person name="Watanabe A."/>
            <person name="Idesawa K."/>
            <person name="Iriguchi M."/>
            <person name="Kawashima K."/>
            <person name="Kohara M."/>
            <person name="Matsumoto M."/>
            <person name="Shimpo S."/>
            <person name="Tsuruoka H."/>
            <person name="Wada T."/>
            <person name="Yamada M."/>
            <person name="Tabata S."/>
        </authorList>
    </citation>
    <scope>NUCLEOTIDE SEQUENCE [LARGE SCALE GENOMIC DNA]</scope>
    <source>
        <strain>JCM 10833 / BCRC 13528 / IAM 13628 / NBRC 14792 / USDA 110</strain>
    </source>
</reference>
<comment type="function">
    <text evidence="1">One of the primary rRNA binding proteins, it binds specifically to the 5'-end of 16S ribosomal RNA.</text>
</comment>
<comment type="subunit">
    <text evidence="1">Part of the 30S ribosomal subunit.</text>
</comment>
<comment type="similarity">
    <text evidence="1">Belongs to the universal ribosomal protein uS17 family.</text>
</comment>
<dbReference type="EMBL" id="BA000040">
    <property type="protein sequence ID" value="BAC50656.1"/>
    <property type="molecule type" value="Genomic_DNA"/>
</dbReference>
<dbReference type="RefSeq" id="NP_772031.1">
    <property type="nucleotide sequence ID" value="NC_004463.1"/>
</dbReference>
<dbReference type="RefSeq" id="WP_011088143.1">
    <property type="nucleotide sequence ID" value="NC_004463.1"/>
</dbReference>
<dbReference type="SMR" id="Q89J93"/>
<dbReference type="FunCoup" id="Q89J93">
    <property type="interactions" value="492"/>
</dbReference>
<dbReference type="STRING" id="224911.AAV28_24365"/>
<dbReference type="EnsemblBacteria" id="BAC50656">
    <property type="protein sequence ID" value="BAC50656"/>
    <property type="gene ID" value="BAC50656"/>
</dbReference>
<dbReference type="GeneID" id="46492389"/>
<dbReference type="KEGG" id="bja:bsl5391"/>
<dbReference type="PATRIC" id="fig|224911.44.peg.5290"/>
<dbReference type="eggNOG" id="COG0186">
    <property type="taxonomic scope" value="Bacteria"/>
</dbReference>
<dbReference type="HOGENOM" id="CLU_073626_1_1_5"/>
<dbReference type="InParanoid" id="Q89J93"/>
<dbReference type="OrthoDB" id="9811714at2"/>
<dbReference type="PhylomeDB" id="Q89J93"/>
<dbReference type="Proteomes" id="UP000002526">
    <property type="component" value="Chromosome"/>
</dbReference>
<dbReference type="GO" id="GO:0022627">
    <property type="term" value="C:cytosolic small ribosomal subunit"/>
    <property type="evidence" value="ECO:0000318"/>
    <property type="project" value="GO_Central"/>
</dbReference>
<dbReference type="GO" id="GO:0019843">
    <property type="term" value="F:rRNA binding"/>
    <property type="evidence" value="ECO:0007669"/>
    <property type="project" value="UniProtKB-UniRule"/>
</dbReference>
<dbReference type="GO" id="GO:0003735">
    <property type="term" value="F:structural constituent of ribosome"/>
    <property type="evidence" value="ECO:0000318"/>
    <property type="project" value="GO_Central"/>
</dbReference>
<dbReference type="GO" id="GO:0006412">
    <property type="term" value="P:translation"/>
    <property type="evidence" value="ECO:0007669"/>
    <property type="project" value="UniProtKB-UniRule"/>
</dbReference>
<dbReference type="CDD" id="cd00364">
    <property type="entry name" value="Ribosomal_uS17"/>
    <property type="match status" value="1"/>
</dbReference>
<dbReference type="FunFam" id="2.40.50.140:FF:000204">
    <property type="entry name" value="30S ribosomal protein S17"/>
    <property type="match status" value="1"/>
</dbReference>
<dbReference type="Gene3D" id="2.40.50.140">
    <property type="entry name" value="Nucleic acid-binding proteins"/>
    <property type="match status" value="1"/>
</dbReference>
<dbReference type="HAMAP" id="MF_01345_B">
    <property type="entry name" value="Ribosomal_uS17_B"/>
    <property type="match status" value="1"/>
</dbReference>
<dbReference type="InterPro" id="IPR012340">
    <property type="entry name" value="NA-bd_OB-fold"/>
</dbReference>
<dbReference type="InterPro" id="IPR000266">
    <property type="entry name" value="Ribosomal_uS17"/>
</dbReference>
<dbReference type="InterPro" id="IPR019984">
    <property type="entry name" value="Ribosomal_uS17_bact/chlr"/>
</dbReference>
<dbReference type="InterPro" id="IPR019979">
    <property type="entry name" value="Ribosomal_uS17_CS"/>
</dbReference>
<dbReference type="NCBIfam" id="NF004123">
    <property type="entry name" value="PRK05610.1"/>
    <property type="match status" value="1"/>
</dbReference>
<dbReference type="NCBIfam" id="TIGR03635">
    <property type="entry name" value="uS17_bact"/>
    <property type="match status" value="1"/>
</dbReference>
<dbReference type="PANTHER" id="PTHR10744">
    <property type="entry name" value="40S RIBOSOMAL PROTEIN S11 FAMILY MEMBER"/>
    <property type="match status" value="1"/>
</dbReference>
<dbReference type="PANTHER" id="PTHR10744:SF1">
    <property type="entry name" value="SMALL RIBOSOMAL SUBUNIT PROTEIN US17M"/>
    <property type="match status" value="1"/>
</dbReference>
<dbReference type="Pfam" id="PF00366">
    <property type="entry name" value="Ribosomal_S17"/>
    <property type="match status" value="1"/>
</dbReference>
<dbReference type="PRINTS" id="PR00973">
    <property type="entry name" value="RIBOSOMALS17"/>
</dbReference>
<dbReference type="SUPFAM" id="SSF50249">
    <property type="entry name" value="Nucleic acid-binding proteins"/>
    <property type="match status" value="1"/>
</dbReference>
<dbReference type="PROSITE" id="PS00056">
    <property type="entry name" value="RIBOSOMAL_S17"/>
    <property type="match status" value="1"/>
</dbReference>
<organism>
    <name type="scientific">Bradyrhizobium diazoefficiens (strain JCM 10833 / BCRC 13528 / IAM 13628 / NBRC 14792 / USDA 110)</name>
    <dbReference type="NCBI Taxonomy" id="224911"/>
    <lineage>
        <taxon>Bacteria</taxon>
        <taxon>Pseudomonadati</taxon>
        <taxon>Pseudomonadota</taxon>
        <taxon>Alphaproteobacteria</taxon>
        <taxon>Hyphomicrobiales</taxon>
        <taxon>Nitrobacteraceae</taxon>
        <taxon>Bradyrhizobium</taxon>
    </lineage>
</organism>
<gene>
    <name evidence="1" type="primary">rpsQ</name>
    <name type="ordered locus">bsl5391</name>
</gene>
<keyword id="KW-1185">Reference proteome</keyword>
<keyword id="KW-0687">Ribonucleoprotein</keyword>
<keyword id="KW-0689">Ribosomal protein</keyword>
<keyword id="KW-0694">RNA-binding</keyword>
<keyword id="KW-0699">rRNA-binding</keyword>
<feature type="chain" id="PRO_0000233440" description="Small ribosomal subunit protein uS17">
    <location>
        <begin position="1"/>
        <end position="82"/>
    </location>
</feature>
<sequence length="82" mass="9683">MPKRTLQGVVVSDKTAKTVVVRVDRRFTHPIYKKTIRRSKNYHAHDENNEFKPGDMVWIEESKPISKLKRWVVIRGEHKKSA</sequence>
<name>RS17_BRADU</name>